<name>DUSB_SALTY</name>
<accession>P0A2R6</accession>
<accession>P37405</accession>
<accession>Q8Z3D1</accession>
<organism>
    <name type="scientific">Salmonella typhimurium (strain LT2 / SGSC1412 / ATCC 700720)</name>
    <dbReference type="NCBI Taxonomy" id="99287"/>
    <lineage>
        <taxon>Bacteria</taxon>
        <taxon>Pseudomonadati</taxon>
        <taxon>Pseudomonadota</taxon>
        <taxon>Gammaproteobacteria</taxon>
        <taxon>Enterobacterales</taxon>
        <taxon>Enterobacteriaceae</taxon>
        <taxon>Salmonella</taxon>
    </lineage>
</organism>
<feature type="chain" id="PRO_0000162097" description="tRNA-dihydrouridine synthase B">
    <location>
        <begin position="1"/>
        <end position="321"/>
    </location>
</feature>
<feature type="active site" description="Proton donor" evidence="1">
    <location>
        <position position="100"/>
    </location>
</feature>
<feature type="binding site" evidence="1">
    <location>
        <begin position="16"/>
        <end position="18"/>
    </location>
    <ligand>
        <name>FMN</name>
        <dbReference type="ChEBI" id="CHEBI:58210"/>
    </ligand>
</feature>
<feature type="binding site" evidence="1">
    <location>
        <position position="70"/>
    </location>
    <ligand>
        <name>FMN</name>
        <dbReference type="ChEBI" id="CHEBI:58210"/>
    </ligand>
</feature>
<feature type="binding site" evidence="1">
    <location>
        <position position="139"/>
    </location>
    <ligand>
        <name>FMN</name>
        <dbReference type="ChEBI" id="CHEBI:58210"/>
    </ligand>
</feature>
<feature type="binding site" evidence="1">
    <location>
        <begin position="200"/>
        <end position="202"/>
    </location>
    <ligand>
        <name>FMN</name>
        <dbReference type="ChEBI" id="CHEBI:58210"/>
    </ligand>
</feature>
<feature type="binding site" evidence="1">
    <location>
        <begin position="224"/>
        <end position="225"/>
    </location>
    <ligand>
        <name>FMN</name>
        <dbReference type="ChEBI" id="CHEBI:58210"/>
    </ligand>
</feature>
<feature type="sequence conflict" description="In Ref. 1; AAA69019." evidence="2" ref="1">
    <original>PLPL</original>
    <variation>RRAS</variation>
    <location>
        <begin position="249"/>
        <end position="252"/>
    </location>
</feature>
<feature type="sequence conflict" description="In Ref. 1; AAA69019." evidence="2" ref="1">
    <original>Q</original>
    <variation>P</variation>
    <location>
        <position position="272"/>
    </location>
</feature>
<dbReference type="EC" id="1.3.1.-" evidence="1"/>
<dbReference type="EMBL" id="U03101">
    <property type="protein sequence ID" value="AAA69019.1"/>
    <property type="molecule type" value="Genomic_DNA"/>
</dbReference>
<dbReference type="EMBL" id="AE006468">
    <property type="protein sequence ID" value="AAL22253.1"/>
    <property type="molecule type" value="Genomic_DNA"/>
</dbReference>
<dbReference type="PIR" id="A56267">
    <property type="entry name" value="A56267"/>
</dbReference>
<dbReference type="RefSeq" id="WP_001219664.1">
    <property type="nucleotide sequence ID" value="NC_003197.2"/>
</dbReference>
<dbReference type="SMR" id="P0A2R6"/>
<dbReference type="STRING" id="99287.STM3384"/>
<dbReference type="PaxDb" id="99287-STM3384"/>
<dbReference type="KEGG" id="stm:STM3384"/>
<dbReference type="PATRIC" id="fig|99287.12.peg.3585"/>
<dbReference type="HOGENOM" id="CLU_013299_0_1_6"/>
<dbReference type="OMA" id="QRPHHDI"/>
<dbReference type="PhylomeDB" id="P0A2R6"/>
<dbReference type="BioCyc" id="SENT99287:STM3384-MONOMER"/>
<dbReference type="Proteomes" id="UP000001014">
    <property type="component" value="Chromosome"/>
</dbReference>
<dbReference type="GO" id="GO:0050660">
    <property type="term" value="F:flavin adenine dinucleotide binding"/>
    <property type="evidence" value="ECO:0007669"/>
    <property type="project" value="InterPro"/>
</dbReference>
<dbReference type="GO" id="GO:0010181">
    <property type="term" value="F:FMN binding"/>
    <property type="evidence" value="ECO:0007669"/>
    <property type="project" value="UniProtKB-UniRule"/>
</dbReference>
<dbReference type="GO" id="GO:0000049">
    <property type="term" value="F:tRNA binding"/>
    <property type="evidence" value="ECO:0007669"/>
    <property type="project" value="UniProtKB-UniRule"/>
</dbReference>
<dbReference type="GO" id="GO:0017150">
    <property type="term" value="F:tRNA dihydrouridine synthase activity"/>
    <property type="evidence" value="ECO:0007669"/>
    <property type="project" value="UniProtKB-UniRule"/>
</dbReference>
<dbReference type="CDD" id="cd02801">
    <property type="entry name" value="DUS_like_FMN"/>
    <property type="match status" value="1"/>
</dbReference>
<dbReference type="FunFam" id="1.10.1200.80:FF:000001">
    <property type="entry name" value="tRNA-dihydrouridine synthase B"/>
    <property type="match status" value="1"/>
</dbReference>
<dbReference type="FunFam" id="3.20.20.70:FF:000051">
    <property type="entry name" value="tRNA-dihydrouridine synthase B"/>
    <property type="match status" value="1"/>
</dbReference>
<dbReference type="Gene3D" id="3.20.20.70">
    <property type="entry name" value="Aldolase class I"/>
    <property type="match status" value="1"/>
</dbReference>
<dbReference type="Gene3D" id="1.10.1200.80">
    <property type="entry name" value="Putative flavin oxidoreducatase, domain 2"/>
    <property type="match status" value="1"/>
</dbReference>
<dbReference type="HAMAP" id="MF_02042">
    <property type="entry name" value="DusB_subfam"/>
    <property type="match status" value="1"/>
</dbReference>
<dbReference type="InterPro" id="IPR013785">
    <property type="entry name" value="Aldolase_TIM"/>
</dbReference>
<dbReference type="InterPro" id="IPR035587">
    <property type="entry name" value="DUS-like_FMN-bd"/>
</dbReference>
<dbReference type="InterPro" id="IPR001269">
    <property type="entry name" value="DUS_fam"/>
</dbReference>
<dbReference type="InterPro" id="IPR032887">
    <property type="entry name" value="DusB"/>
</dbReference>
<dbReference type="InterPro" id="IPR004652">
    <property type="entry name" value="DusB-like"/>
</dbReference>
<dbReference type="InterPro" id="IPR024036">
    <property type="entry name" value="tRNA-dHydroUridine_Synthase_C"/>
</dbReference>
<dbReference type="InterPro" id="IPR018517">
    <property type="entry name" value="tRNA_hU_synthase_CS"/>
</dbReference>
<dbReference type="NCBIfam" id="TIGR00737">
    <property type="entry name" value="nifR3_yhdG"/>
    <property type="match status" value="1"/>
</dbReference>
<dbReference type="PANTHER" id="PTHR45846">
    <property type="entry name" value="TRNA-DIHYDROURIDINE(47) SYNTHASE [NAD(P)(+)]-LIKE"/>
    <property type="match status" value="1"/>
</dbReference>
<dbReference type="PANTHER" id="PTHR45846:SF1">
    <property type="entry name" value="TRNA-DIHYDROURIDINE(47) SYNTHASE [NAD(P)(+)]-LIKE"/>
    <property type="match status" value="1"/>
</dbReference>
<dbReference type="Pfam" id="PF01207">
    <property type="entry name" value="Dus"/>
    <property type="match status" value="1"/>
</dbReference>
<dbReference type="PIRSF" id="PIRSF006621">
    <property type="entry name" value="Dus"/>
    <property type="match status" value="1"/>
</dbReference>
<dbReference type="SUPFAM" id="SSF51395">
    <property type="entry name" value="FMN-linked oxidoreductases"/>
    <property type="match status" value="1"/>
</dbReference>
<dbReference type="PROSITE" id="PS01136">
    <property type="entry name" value="UPF0034"/>
    <property type="match status" value="1"/>
</dbReference>
<gene>
    <name evidence="1" type="primary">dusB</name>
    <name type="ordered locus">STM3384</name>
</gene>
<sequence length="321" mass="35846">MRIGQYQLRNRLIAAPMAGITDRPFRTLCYEMGAGLTVSEMMSSNPQVWESDKSRLRMVHVDEPGIRTVQIAGSDPVEMADAARINVESGAQIIDINMGCPAKKVNRKLAGSALLQYPDLVKSILIGVVNAVDVPVTLKIRTGWAPEHRNCVEIAQLAEDCGIQALTIHGRTRACLFNGEAEYDSIRAVKQKVSIPIIANGDITNPHKARAVLDYTGADALMIGRAAQGRPWIFREIQHYLDTGELLPPLPLAEVKRLLCTHVRELHDFYGQAKGYRIARKHVSWYLQEHAPDDQFRRTFNAIEDASEQLEALEAYFENFA</sequence>
<proteinExistence type="inferred from homology"/>
<keyword id="KW-0285">Flavoprotein</keyword>
<keyword id="KW-0288">FMN</keyword>
<keyword id="KW-0521">NADP</keyword>
<keyword id="KW-0560">Oxidoreductase</keyword>
<keyword id="KW-1185">Reference proteome</keyword>
<keyword id="KW-0694">RNA-binding</keyword>
<keyword id="KW-0819">tRNA processing</keyword>
<keyword id="KW-0820">tRNA-binding</keyword>
<evidence type="ECO:0000255" key="1">
    <source>
        <dbReference type="HAMAP-Rule" id="MF_02042"/>
    </source>
</evidence>
<evidence type="ECO:0000305" key="2"/>
<comment type="function">
    <text evidence="1">Catalyzes the synthesis of 5,6-dihydrouridine (D), a modified base found in the D-loop of most tRNAs, via the reduction of the C5-C6 double bond in target uridines.</text>
</comment>
<comment type="catalytic activity">
    <reaction evidence="1">
        <text>a 5,6-dihydrouridine in tRNA + NAD(+) = a uridine in tRNA + NADH + H(+)</text>
        <dbReference type="Rhea" id="RHEA:54452"/>
        <dbReference type="Rhea" id="RHEA-COMP:13339"/>
        <dbReference type="Rhea" id="RHEA-COMP:13887"/>
        <dbReference type="ChEBI" id="CHEBI:15378"/>
        <dbReference type="ChEBI" id="CHEBI:57540"/>
        <dbReference type="ChEBI" id="CHEBI:57945"/>
        <dbReference type="ChEBI" id="CHEBI:65315"/>
        <dbReference type="ChEBI" id="CHEBI:74443"/>
    </reaction>
</comment>
<comment type="catalytic activity">
    <reaction evidence="1">
        <text>a 5,6-dihydrouridine in tRNA + NADP(+) = a uridine in tRNA + NADPH + H(+)</text>
        <dbReference type="Rhea" id="RHEA:23624"/>
        <dbReference type="Rhea" id="RHEA-COMP:13339"/>
        <dbReference type="Rhea" id="RHEA-COMP:13887"/>
        <dbReference type="ChEBI" id="CHEBI:15378"/>
        <dbReference type="ChEBI" id="CHEBI:57783"/>
        <dbReference type="ChEBI" id="CHEBI:58349"/>
        <dbReference type="ChEBI" id="CHEBI:65315"/>
        <dbReference type="ChEBI" id="CHEBI:74443"/>
    </reaction>
</comment>
<comment type="cofactor">
    <cofactor evidence="1">
        <name>FMN</name>
        <dbReference type="ChEBI" id="CHEBI:58210"/>
    </cofactor>
</comment>
<comment type="similarity">
    <text evidence="1">Belongs to the Dus family. DusB subfamily.</text>
</comment>
<protein>
    <recommendedName>
        <fullName evidence="1">tRNA-dihydrouridine synthase B</fullName>
        <ecNumber evidence="1">1.3.1.-</ecNumber>
    </recommendedName>
</protein>
<reference key="1">
    <citation type="journal article" date="1995" name="J. Bacteriol.">
        <title>Sequence, regulation, and functions of fis in Salmonella typhimurium.</title>
        <authorList>
            <person name="Osuna R."/>
            <person name="Lienau D."/>
            <person name="Hughes K.T."/>
            <person name="Johnson R.C."/>
        </authorList>
    </citation>
    <scope>NUCLEOTIDE SEQUENCE [GENOMIC DNA]</scope>
    <source>
        <strain>LT2</strain>
    </source>
</reference>
<reference key="2">
    <citation type="journal article" date="2001" name="Nature">
        <title>Complete genome sequence of Salmonella enterica serovar Typhimurium LT2.</title>
        <authorList>
            <person name="McClelland M."/>
            <person name="Sanderson K.E."/>
            <person name="Spieth J."/>
            <person name="Clifton S.W."/>
            <person name="Latreille P."/>
            <person name="Courtney L."/>
            <person name="Porwollik S."/>
            <person name="Ali J."/>
            <person name="Dante M."/>
            <person name="Du F."/>
            <person name="Hou S."/>
            <person name="Layman D."/>
            <person name="Leonard S."/>
            <person name="Nguyen C."/>
            <person name="Scott K."/>
            <person name="Holmes A."/>
            <person name="Grewal N."/>
            <person name="Mulvaney E."/>
            <person name="Ryan E."/>
            <person name="Sun H."/>
            <person name="Florea L."/>
            <person name="Miller W."/>
            <person name="Stoneking T."/>
            <person name="Nhan M."/>
            <person name="Waterston R."/>
            <person name="Wilson R.K."/>
        </authorList>
    </citation>
    <scope>NUCLEOTIDE SEQUENCE [LARGE SCALE GENOMIC DNA]</scope>
    <source>
        <strain>LT2 / SGSC1412 / ATCC 700720</strain>
    </source>
</reference>